<reference key="1">
    <citation type="submission" date="2006-08" db="EMBL/GenBank/DDBJ databases">
        <title>Complete sequence of Maricaulis maris MCS10.</title>
        <authorList>
            <consortium name="US DOE Joint Genome Institute"/>
            <person name="Copeland A."/>
            <person name="Lucas S."/>
            <person name="Lapidus A."/>
            <person name="Barry K."/>
            <person name="Detter J.C."/>
            <person name="Glavina del Rio T."/>
            <person name="Hammon N."/>
            <person name="Israni S."/>
            <person name="Dalin E."/>
            <person name="Tice H."/>
            <person name="Pitluck S."/>
            <person name="Saunders E."/>
            <person name="Brettin T."/>
            <person name="Bruce D."/>
            <person name="Han C."/>
            <person name="Tapia R."/>
            <person name="Gilna P."/>
            <person name="Schmutz J."/>
            <person name="Larimer F."/>
            <person name="Land M."/>
            <person name="Hauser L."/>
            <person name="Kyrpides N."/>
            <person name="Mikhailova N."/>
            <person name="Viollier P."/>
            <person name="Stephens C."/>
            <person name="Richardson P."/>
        </authorList>
    </citation>
    <scope>NUCLEOTIDE SEQUENCE [LARGE SCALE GENOMIC DNA]</scope>
    <source>
        <strain>MCS10</strain>
    </source>
</reference>
<accession>Q0APG4</accession>
<evidence type="ECO:0000255" key="1">
    <source>
        <dbReference type="HAMAP-Rule" id="MF_00073"/>
    </source>
</evidence>
<feature type="chain" id="PRO_0000265541" description="Transcription antitermination protein NusB">
    <location>
        <begin position="1"/>
        <end position="160"/>
    </location>
</feature>
<proteinExistence type="inferred from homology"/>
<protein>
    <recommendedName>
        <fullName evidence="1">Transcription antitermination protein NusB</fullName>
    </recommendedName>
    <alternativeName>
        <fullName evidence="1">Antitermination factor NusB</fullName>
    </alternativeName>
</protein>
<organism>
    <name type="scientific">Maricaulis maris (strain MCS10)</name>
    <name type="common">Caulobacter maris</name>
    <dbReference type="NCBI Taxonomy" id="394221"/>
    <lineage>
        <taxon>Bacteria</taxon>
        <taxon>Pseudomonadati</taxon>
        <taxon>Pseudomonadota</taxon>
        <taxon>Alphaproteobacteria</taxon>
        <taxon>Maricaulales</taxon>
        <taxon>Maricaulaceae</taxon>
        <taxon>Maricaulis</taxon>
    </lineage>
</organism>
<keyword id="KW-1185">Reference proteome</keyword>
<keyword id="KW-0694">RNA-binding</keyword>
<keyword id="KW-0804">Transcription</keyword>
<keyword id="KW-0889">Transcription antitermination</keyword>
<keyword id="KW-0805">Transcription regulation</keyword>
<name>NUSB_MARMM</name>
<comment type="function">
    <text evidence="1">Involved in transcription antitermination. Required for transcription of ribosomal RNA (rRNA) genes. Binds specifically to the boxA antiterminator sequence of the ribosomal RNA (rrn) operons.</text>
</comment>
<comment type="similarity">
    <text evidence="1">Belongs to the NusB family.</text>
</comment>
<gene>
    <name evidence="1" type="primary">nusB</name>
    <name type="ordered locus">Mmar10_1531</name>
</gene>
<dbReference type="EMBL" id="CP000449">
    <property type="protein sequence ID" value="ABI65823.1"/>
    <property type="molecule type" value="Genomic_DNA"/>
</dbReference>
<dbReference type="RefSeq" id="WP_011643470.1">
    <property type="nucleotide sequence ID" value="NC_008347.1"/>
</dbReference>
<dbReference type="SMR" id="Q0APG4"/>
<dbReference type="STRING" id="394221.Mmar10_1531"/>
<dbReference type="KEGG" id="mmr:Mmar10_1531"/>
<dbReference type="eggNOG" id="COG0781">
    <property type="taxonomic scope" value="Bacteria"/>
</dbReference>
<dbReference type="HOGENOM" id="CLU_087843_4_0_5"/>
<dbReference type="OrthoDB" id="9797817at2"/>
<dbReference type="Proteomes" id="UP000001964">
    <property type="component" value="Chromosome"/>
</dbReference>
<dbReference type="GO" id="GO:0005829">
    <property type="term" value="C:cytosol"/>
    <property type="evidence" value="ECO:0007669"/>
    <property type="project" value="TreeGrafter"/>
</dbReference>
<dbReference type="GO" id="GO:0003723">
    <property type="term" value="F:RNA binding"/>
    <property type="evidence" value="ECO:0007669"/>
    <property type="project" value="UniProtKB-UniRule"/>
</dbReference>
<dbReference type="GO" id="GO:0006353">
    <property type="term" value="P:DNA-templated transcription termination"/>
    <property type="evidence" value="ECO:0007669"/>
    <property type="project" value="UniProtKB-UniRule"/>
</dbReference>
<dbReference type="GO" id="GO:0031564">
    <property type="term" value="P:transcription antitermination"/>
    <property type="evidence" value="ECO:0007669"/>
    <property type="project" value="UniProtKB-KW"/>
</dbReference>
<dbReference type="Gene3D" id="1.10.940.10">
    <property type="entry name" value="NusB-like"/>
    <property type="match status" value="1"/>
</dbReference>
<dbReference type="HAMAP" id="MF_00073">
    <property type="entry name" value="NusB"/>
    <property type="match status" value="1"/>
</dbReference>
<dbReference type="InterPro" id="IPR035926">
    <property type="entry name" value="NusB-like_sf"/>
</dbReference>
<dbReference type="InterPro" id="IPR011605">
    <property type="entry name" value="NusB_fam"/>
</dbReference>
<dbReference type="InterPro" id="IPR006027">
    <property type="entry name" value="NusB_RsmB_TIM44"/>
</dbReference>
<dbReference type="NCBIfam" id="TIGR01951">
    <property type="entry name" value="nusB"/>
    <property type="match status" value="1"/>
</dbReference>
<dbReference type="PANTHER" id="PTHR11078:SF3">
    <property type="entry name" value="ANTITERMINATION NUSB DOMAIN-CONTAINING PROTEIN"/>
    <property type="match status" value="1"/>
</dbReference>
<dbReference type="PANTHER" id="PTHR11078">
    <property type="entry name" value="N UTILIZATION SUBSTANCE PROTEIN B-RELATED"/>
    <property type="match status" value="1"/>
</dbReference>
<dbReference type="Pfam" id="PF01029">
    <property type="entry name" value="NusB"/>
    <property type="match status" value="1"/>
</dbReference>
<dbReference type="SUPFAM" id="SSF48013">
    <property type="entry name" value="NusB-like"/>
    <property type="match status" value="1"/>
</dbReference>
<sequence length="160" mass="17813">MATASKESPSENRARLRRAARLSAVQALYQMEIGGLGASAVIREFREHRFGACGEAPEFVEADEDFFESLVAGVVERQADVDPAMDALLADKWRLERLDATVRAILRVGGFELLYRKDVPARVVIDEYIEVANAFFEGAEPKFINAAFDRCARGARPDEF</sequence>